<accession>Q6G322</accession>
<keyword id="KW-0032">Aminotransferase</keyword>
<keyword id="KW-0963">Cytoplasm</keyword>
<keyword id="KW-0315">Glutamine amidotransferase</keyword>
<keyword id="KW-0677">Repeat</keyword>
<keyword id="KW-0808">Transferase</keyword>
<name>GLMS_BARHE</name>
<organism>
    <name type="scientific">Bartonella henselae (strain ATCC 49882 / DSM 28221 / CCUG 30454 / Houston 1)</name>
    <name type="common">Rochalimaea henselae</name>
    <dbReference type="NCBI Taxonomy" id="283166"/>
    <lineage>
        <taxon>Bacteria</taxon>
        <taxon>Pseudomonadati</taxon>
        <taxon>Pseudomonadota</taxon>
        <taxon>Alphaproteobacteria</taxon>
        <taxon>Hyphomicrobiales</taxon>
        <taxon>Bartonellaceae</taxon>
        <taxon>Bartonella</taxon>
    </lineage>
</organism>
<comment type="function">
    <text evidence="1">Catalyzes the first step in hexosamine metabolism, converting fructose-6P into glucosamine-6P using glutamine as a nitrogen source.</text>
</comment>
<comment type="catalytic activity">
    <reaction evidence="1">
        <text>D-fructose 6-phosphate + L-glutamine = D-glucosamine 6-phosphate + L-glutamate</text>
        <dbReference type="Rhea" id="RHEA:13237"/>
        <dbReference type="ChEBI" id="CHEBI:29985"/>
        <dbReference type="ChEBI" id="CHEBI:58359"/>
        <dbReference type="ChEBI" id="CHEBI:58725"/>
        <dbReference type="ChEBI" id="CHEBI:61527"/>
        <dbReference type="EC" id="2.6.1.16"/>
    </reaction>
</comment>
<comment type="subunit">
    <text evidence="1">Homodimer.</text>
</comment>
<comment type="subcellular location">
    <subcellularLocation>
        <location evidence="1">Cytoplasm</location>
    </subcellularLocation>
</comment>
<dbReference type="EC" id="2.6.1.16" evidence="1"/>
<dbReference type="EMBL" id="BX897699">
    <property type="protein sequence ID" value="CAF27784.1"/>
    <property type="molecule type" value="Genomic_DNA"/>
</dbReference>
<dbReference type="RefSeq" id="WP_011180858.1">
    <property type="nucleotide sequence ID" value="NZ_LRIJ02000001.1"/>
</dbReference>
<dbReference type="SMR" id="Q6G322"/>
<dbReference type="PaxDb" id="283166-BH09920"/>
<dbReference type="EnsemblBacteria" id="CAF27784">
    <property type="protein sequence ID" value="CAF27784"/>
    <property type="gene ID" value="BH09920"/>
</dbReference>
<dbReference type="GeneID" id="92985321"/>
<dbReference type="KEGG" id="bhe:BH09920"/>
<dbReference type="eggNOG" id="COG0449">
    <property type="taxonomic scope" value="Bacteria"/>
</dbReference>
<dbReference type="OrthoDB" id="9761808at2"/>
<dbReference type="Proteomes" id="UP000000421">
    <property type="component" value="Chromosome"/>
</dbReference>
<dbReference type="GO" id="GO:0005829">
    <property type="term" value="C:cytosol"/>
    <property type="evidence" value="ECO:0007669"/>
    <property type="project" value="TreeGrafter"/>
</dbReference>
<dbReference type="GO" id="GO:0097367">
    <property type="term" value="F:carbohydrate derivative binding"/>
    <property type="evidence" value="ECO:0007669"/>
    <property type="project" value="InterPro"/>
</dbReference>
<dbReference type="GO" id="GO:0004360">
    <property type="term" value="F:glutamine-fructose-6-phosphate transaminase (isomerizing) activity"/>
    <property type="evidence" value="ECO:0007669"/>
    <property type="project" value="UniProtKB-UniRule"/>
</dbReference>
<dbReference type="GO" id="GO:0005975">
    <property type="term" value="P:carbohydrate metabolic process"/>
    <property type="evidence" value="ECO:0007669"/>
    <property type="project" value="UniProtKB-UniRule"/>
</dbReference>
<dbReference type="GO" id="GO:0006002">
    <property type="term" value="P:fructose 6-phosphate metabolic process"/>
    <property type="evidence" value="ECO:0007669"/>
    <property type="project" value="TreeGrafter"/>
</dbReference>
<dbReference type="GO" id="GO:0006487">
    <property type="term" value="P:protein N-linked glycosylation"/>
    <property type="evidence" value="ECO:0007669"/>
    <property type="project" value="TreeGrafter"/>
</dbReference>
<dbReference type="GO" id="GO:0006047">
    <property type="term" value="P:UDP-N-acetylglucosamine metabolic process"/>
    <property type="evidence" value="ECO:0007669"/>
    <property type="project" value="TreeGrafter"/>
</dbReference>
<dbReference type="CDD" id="cd00714">
    <property type="entry name" value="GFAT"/>
    <property type="match status" value="1"/>
</dbReference>
<dbReference type="CDD" id="cd05008">
    <property type="entry name" value="SIS_GlmS_GlmD_1"/>
    <property type="match status" value="1"/>
</dbReference>
<dbReference type="CDD" id="cd05009">
    <property type="entry name" value="SIS_GlmS_GlmD_2"/>
    <property type="match status" value="1"/>
</dbReference>
<dbReference type="FunFam" id="3.40.50.10490:FF:000001">
    <property type="entry name" value="Glutamine--fructose-6-phosphate aminotransferase [isomerizing]"/>
    <property type="match status" value="1"/>
</dbReference>
<dbReference type="FunFam" id="3.40.50.10490:FF:000002">
    <property type="entry name" value="Glutamine--fructose-6-phosphate aminotransferase [isomerizing]"/>
    <property type="match status" value="1"/>
</dbReference>
<dbReference type="FunFam" id="3.60.20.10:FF:000006">
    <property type="entry name" value="Glutamine--fructose-6-phosphate aminotransferase [isomerizing]"/>
    <property type="match status" value="1"/>
</dbReference>
<dbReference type="Gene3D" id="3.40.50.10490">
    <property type="entry name" value="Glucose-6-phosphate isomerase like protein, domain 1"/>
    <property type="match status" value="2"/>
</dbReference>
<dbReference type="Gene3D" id="3.60.20.10">
    <property type="entry name" value="Glutamine Phosphoribosylpyrophosphate, subunit 1, domain 1"/>
    <property type="match status" value="1"/>
</dbReference>
<dbReference type="HAMAP" id="MF_00164">
    <property type="entry name" value="GlmS"/>
    <property type="match status" value="1"/>
</dbReference>
<dbReference type="InterPro" id="IPR017932">
    <property type="entry name" value="GATase_2_dom"/>
</dbReference>
<dbReference type="InterPro" id="IPR005855">
    <property type="entry name" value="GFAT"/>
</dbReference>
<dbReference type="InterPro" id="IPR047084">
    <property type="entry name" value="GFAT_N"/>
</dbReference>
<dbReference type="InterPro" id="IPR035466">
    <property type="entry name" value="GlmS/AgaS_SIS"/>
</dbReference>
<dbReference type="InterPro" id="IPR035490">
    <property type="entry name" value="GlmS/FrlB_SIS"/>
</dbReference>
<dbReference type="InterPro" id="IPR029055">
    <property type="entry name" value="Ntn_hydrolases_N"/>
</dbReference>
<dbReference type="InterPro" id="IPR001347">
    <property type="entry name" value="SIS_dom"/>
</dbReference>
<dbReference type="InterPro" id="IPR046348">
    <property type="entry name" value="SIS_dom_sf"/>
</dbReference>
<dbReference type="NCBIfam" id="TIGR01135">
    <property type="entry name" value="glmS"/>
    <property type="match status" value="1"/>
</dbReference>
<dbReference type="NCBIfam" id="NF001484">
    <property type="entry name" value="PRK00331.1"/>
    <property type="match status" value="1"/>
</dbReference>
<dbReference type="PANTHER" id="PTHR10937">
    <property type="entry name" value="GLUCOSAMINE--FRUCTOSE-6-PHOSPHATE AMINOTRANSFERASE, ISOMERIZING"/>
    <property type="match status" value="1"/>
</dbReference>
<dbReference type="PANTHER" id="PTHR10937:SF0">
    <property type="entry name" value="GLUTAMINE--FRUCTOSE-6-PHOSPHATE TRANSAMINASE (ISOMERIZING)"/>
    <property type="match status" value="1"/>
</dbReference>
<dbReference type="Pfam" id="PF13522">
    <property type="entry name" value="GATase_6"/>
    <property type="match status" value="1"/>
</dbReference>
<dbReference type="Pfam" id="PF01380">
    <property type="entry name" value="SIS"/>
    <property type="match status" value="2"/>
</dbReference>
<dbReference type="SUPFAM" id="SSF56235">
    <property type="entry name" value="N-terminal nucleophile aminohydrolases (Ntn hydrolases)"/>
    <property type="match status" value="1"/>
</dbReference>
<dbReference type="SUPFAM" id="SSF53697">
    <property type="entry name" value="SIS domain"/>
    <property type="match status" value="1"/>
</dbReference>
<dbReference type="PROSITE" id="PS51278">
    <property type="entry name" value="GATASE_TYPE_2"/>
    <property type="match status" value="1"/>
</dbReference>
<dbReference type="PROSITE" id="PS51464">
    <property type="entry name" value="SIS"/>
    <property type="match status" value="2"/>
</dbReference>
<feature type="initiator methionine" description="Removed" evidence="1">
    <location>
        <position position="1"/>
    </location>
</feature>
<feature type="chain" id="PRO_0000135302" description="Glutamine--fructose-6-phosphate aminotransferase [isomerizing]">
    <location>
        <begin position="2"/>
        <end position="607"/>
    </location>
</feature>
<feature type="domain" description="Glutamine amidotransferase type-2" evidence="1">
    <location>
        <begin position="2"/>
        <end position="217"/>
    </location>
</feature>
<feature type="domain" description="SIS 1" evidence="1">
    <location>
        <begin position="277"/>
        <end position="422"/>
    </location>
</feature>
<feature type="domain" description="SIS 2" evidence="1">
    <location>
        <begin position="455"/>
        <end position="597"/>
    </location>
</feature>
<feature type="active site" description="Nucleophile; for GATase activity" evidence="1">
    <location>
        <position position="2"/>
    </location>
</feature>
<feature type="active site" description="For Fru-6P isomerization activity" evidence="1">
    <location>
        <position position="602"/>
    </location>
</feature>
<sequence>MCGIIGILGKRCVTSSLVESLKRLEYRGYDSSGIATVHNGRLYRIRAEGKLVHLEEKLQKTPLKGNLGIGHTRWATHGVAVERNAHPHVTERLAIVHNGIIENFVELQKELIEDGYTFETETDTEVIAHLITRALKSGLSPQEAIRTSWKRLQGAFAIVVIFEGEDNLMIAARSGPPLAIGYGKDEFFVGSDAIALAPFVDSISYMEDGDWAVLTREDITIYDVDNQPVKRPLTPLFEGALLASKGNHRHFMHKEMFEQPEVISHNLAHYLDLGNYTVRSFQKLIDWKKINRILFASCGTAYYSTLVARYWFESFAALSVDNDVASEFRYREPPINSDVLSVFVSQSGETADTLASLRYCREYGVKTATIVNVEQSTMAREADFVLPTRAGPEIGVASTKAFTCQLATLAAMALDAAKQRGFLAEQAEHQFVQQLAEVPRILNEVLKLDNKIEQICRNLVNVKGVLYLGRGTSYPIALEGALKLKELSYIHAEGYAAGELKHGPIALVDEAIPVIVVAPYDRWFEKTCSNMQEVAARNGRIILITDKKGAEAVHLDILSTIVLPNIPEFIAPIIYALPIQLIAYHTAVLLGTDVDQPRNLAKSVTVE</sequence>
<protein>
    <recommendedName>
        <fullName evidence="1">Glutamine--fructose-6-phosphate aminotransferase [isomerizing]</fullName>
        <ecNumber evidence="1">2.6.1.16</ecNumber>
    </recommendedName>
    <alternativeName>
        <fullName evidence="1">D-fructose-6-phosphate amidotransferase</fullName>
    </alternativeName>
    <alternativeName>
        <fullName evidence="1">GFAT</fullName>
    </alternativeName>
    <alternativeName>
        <fullName evidence="1">Glucosamine-6-phosphate synthase</fullName>
    </alternativeName>
    <alternativeName>
        <fullName evidence="1">Hexosephosphate aminotransferase</fullName>
    </alternativeName>
    <alternativeName>
        <fullName evidence="1">L-glutamine--D-fructose-6-phosphate amidotransferase</fullName>
    </alternativeName>
</protein>
<reference key="1">
    <citation type="journal article" date="2004" name="Proc. Natl. Acad. Sci. U.S.A.">
        <title>The louse-borne human pathogen Bartonella quintana is a genomic derivative of the zoonotic agent Bartonella henselae.</title>
        <authorList>
            <person name="Alsmark U.C.M."/>
            <person name="Frank A.C."/>
            <person name="Karlberg E.O."/>
            <person name="Legault B.-A."/>
            <person name="Ardell D.H."/>
            <person name="Canbaeck B."/>
            <person name="Eriksson A.-S."/>
            <person name="Naeslund A.K."/>
            <person name="Handley S.A."/>
            <person name="Huvet M."/>
            <person name="La Scola B."/>
            <person name="Holmberg M."/>
            <person name="Andersson S.G.E."/>
        </authorList>
    </citation>
    <scope>NUCLEOTIDE SEQUENCE [LARGE SCALE GENOMIC DNA]</scope>
    <source>
        <strain>ATCC 49882 / DSM 28221 / CCUG 30454 / Houston 1</strain>
    </source>
</reference>
<gene>
    <name evidence="1" type="primary">glmS</name>
    <name type="ordered locus">BH09920</name>
</gene>
<evidence type="ECO:0000255" key="1">
    <source>
        <dbReference type="HAMAP-Rule" id="MF_00164"/>
    </source>
</evidence>
<proteinExistence type="inferred from homology"/>